<reference key="1">
    <citation type="journal article" date="1997" name="Nature">
        <title>The complete genome sequence of the gastric pathogen Helicobacter pylori.</title>
        <authorList>
            <person name="Tomb J.-F."/>
            <person name="White O."/>
            <person name="Kerlavage A.R."/>
            <person name="Clayton R.A."/>
            <person name="Sutton G.G."/>
            <person name="Fleischmann R.D."/>
            <person name="Ketchum K.A."/>
            <person name="Klenk H.-P."/>
            <person name="Gill S.R."/>
            <person name="Dougherty B.A."/>
            <person name="Nelson K.E."/>
            <person name="Quackenbush J."/>
            <person name="Zhou L."/>
            <person name="Kirkness E.F."/>
            <person name="Peterson S.N."/>
            <person name="Loftus B.J."/>
            <person name="Richardson D.L."/>
            <person name="Dodson R.J."/>
            <person name="Khalak H.G."/>
            <person name="Glodek A."/>
            <person name="McKenney K."/>
            <person name="FitzGerald L.M."/>
            <person name="Lee N."/>
            <person name="Adams M.D."/>
            <person name="Hickey E.K."/>
            <person name="Berg D.E."/>
            <person name="Gocayne J.D."/>
            <person name="Utterback T.R."/>
            <person name="Peterson J.D."/>
            <person name="Kelley J.M."/>
            <person name="Cotton M.D."/>
            <person name="Weidman J.F."/>
            <person name="Fujii C."/>
            <person name="Bowman C."/>
            <person name="Watthey L."/>
            <person name="Wallin E."/>
            <person name="Hayes W.S."/>
            <person name="Borodovsky M."/>
            <person name="Karp P.D."/>
            <person name="Smith H.O."/>
            <person name="Fraser C.M."/>
            <person name="Venter J.C."/>
        </authorList>
    </citation>
    <scope>NUCLEOTIDE SEQUENCE [LARGE SCALE GENOMIC DNA]</scope>
    <source>
        <strain>ATCC 700392 / 26695</strain>
    </source>
</reference>
<name>EFG_HELPY</name>
<keyword id="KW-0963">Cytoplasm</keyword>
<keyword id="KW-0251">Elongation factor</keyword>
<keyword id="KW-0342">GTP-binding</keyword>
<keyword id="KW-0547">Nucleotide-binding</keyword>
<keyword id="KW-0648">Protein biosynthesis</keyword>
<keyword id="KW-1185">Reference proteome</keyword>
<organism>
    <name type="scientific">Helicobacter pylori (strain ATCC 700392 / 26695)</name>
    <name type="common">Campylobacter pylori</name>
    <dbReference type="NCBI Taxonomy" id="85962"/>
    <lineage>
        <taxon>Bacteria</taxon>
        <taxon>Pseudomonadati</taxon>
        <taxon>Campylobacterota</taxon>
        <taxon>Epsilonproteobacteria</taxon>
        <taxon>Campylobacterales</taxon>
        <taxon>Helicobacteraceae</taxon>
        <taxon>Helicobacter</taxon>
    </lineage>
</organism>
<evidence type="ECO:0000250" key="1"/>
<evidence type="ECO:0000305" key="2"/>
<comment type="function">
    <text evidence="1">Catalyzes the GTP-dependent ribosomal translocation step during translation elongation. During this step, the ribosome changes from the pre-translocational (PRE) to the post-translocational (POST) state as the newly formed A-site-bound peptidyl-tRNA and P-site-bound deacylated tRNA move to the P and E sites, respectively. Catalyzes the coordinated movement of the two tRNA molecules, the mRNA and conformational changes in the ribosome (By similarity).</text>
</comment>
<comment type="subcellular location">
    <subcellularLocation>
        <location evidence="1">Cytoplasm</location>
    </subcellularLocation>
</comment>
<comment type="similarity">
    <text evidence="2">Belongs to the TRAFAC class translation factor GTPase superfamily. Classic translation factor GTPase family. EF-G/EF-2 subfamily.</text>
</comment>
<sequence length="692" mass="77021">MARKTPLNRIRNIGIAAHIDAGKTTTSERILFYTGVSHKIGEVHDGAATMDWMEQEKERGITITSAATTCFWKDHQINLIDTPGHVDFTIEVERSMRVLDGAVSVFCSVGGVQPQSETVWRQANKYGVPRIVFVNKMDRIGANFYNVENQIKLRLKANPVPINIPIGAEDTFIGVIDLVQMKAIVWNNETMGAKYDVEEIPSDLLEKAKEYREKLVEAVAEQDEALMEKYLGGEELSIEEIKKGIKAGCLNMSLVPMLCGSSFKNKGVQTLLDAVIDYLPAPTEVVDIKGIDPKTEEEVFVKSSDDGEFAGLAFKIMTDPFVGQLTFVRVYRGKLESGSYVYNSTKDKKERVGRLLKMHSNKREDIKEVYAGEICAFVGLKDTLTGDTLCDEKNAVVLERMEFPEPVIHIAVEPKTKADQEKMGVALGKLAEEDPSFRVMTQEETGQTLIGGMGELHLEIIVDRLKREFKVEAEIGQPQVAFRETIRSSVSKEHKYAKQSGGRGQYGHVFIKLEPKEPGSGYEFVNEISGGVIPKEYIPAVDKGIQEAMQNGVLAGYPVVDFKVTLYDGSYHDVDSSEMAFKIAGSMAFKEASRAANPVLLEPMMKVEVEVPEEYMGDVIGDLNRRRGQINSMDDRLGLKIVNAFVPLVEMFGYSTDLRSATQGRGTYSMEFDHYGEVPSNIAKEIVEKRKG</sequence>
<accession>P56002</accession>
<proteinExistence type="inferred from homology"/>
<dbReference type="EMBL" id="AE000511">
    <property type="protein sequence ID" value="AAD08239.1"/>
    <property type="molecule type" value="Genomic_DNA"/>
</dbReference>
<dbReference type="PIR" id="C64669">
    <property type="entry name" value="C64669"/>
</dbReference>
<dbReference type="RefSeq" id="NP_207986.1">
    <property type="nucleotide sequence ID" value="NC_000915.1"/>
</dbReference>
<dbReference type="RefSeq" id="WP_000101814.1">
    <property type="nucleotide sequence ID" value="NC_018939.1"/>
</dbReference>
<dbReference type="SMR" id="P56002"/>
<dbReference type="DIP" id="DIP-3214N"/>
<dbReference type="FunCoup" id="P56002">
    <property type="interactions" value="403"/>
</dbReference>
<dbReference type="IntAct" id="P56002">
    <property type="interactions" value="3"/>
</dbReference>
<dbReference type="MINT" id="P56002"/>
<dbReference type="STRING" id="85962.HP_1195"/>
<dbReference type="PaxDb" id="85962-C694_06180"/>
<dbReference type="EnsemblBacteria" id="AAD08239">
    <property type="protein sequence ID" value="AAD08239"/>
    <property type="gene ID" value="HP_1195"/>
</dbReference>
<dbReference type="KEGG" id="heo:C694_06180"/>
<dbReference type="KEGG" id="hpy:HP_1195"/>
<dbReference type="PATRIC" id="fig|85962.47.peg.1284"/>
<dbReference type="eggNOG" id="COG0480">
    <property type="taxonomic scope" value="Bacteria"/>
</dbReference>
<dbReference type="InParanoid" id="P56002"/>
<dbReference type="OrthoDB" id="9804431at2"/>
<dbReference type="PhylomeDB" id="P56002"/>
<dbReference type="Proteomes" id="UP000000429">
    <property type="component" value="Chromosome"/>
</dbReference>
<dbReference type="GO" id="GO:0005737">
    <property type="term" value="C:cytoplasm"/>
    <property type="evidence" value="ECO:0007669"/>
    <property type="project" value="UniProtKB-SubCell"/>
</dbReference>
<dbReference type="GO" id="GO:0005525">
    <property type="term" value="F:GTP binding"/>
    <property type="evidence" value="ECO:0007669"/>
    <property type="project" value="UniProtKB-UniRule"/>
</dbReference>
<dbReference type="GO" id="GO:0003924">
    <property type="term" value="F:GTPase activity"/>
    <property type="evidence" value="ECO:0007669"/>
    <property type="project" value="InterPro"/>
</dbReference>
<dbReference type="GO" id="GO:0003746">
    <property type="term" value="F:translation elongation factor activity"/>
    <property type="evidence" value="ECO:0007669"/>
    <property type="project" value="UniProtKB-UniRule"/>
</dbReference>
<dbReference type="GO" id="GO:0032790">
    <property type="term" value="P:ribosome disassembly"/>
    <property type="evidence" value="ECO:0000318"/>
    <property type="project" value="GO_Central"/>
</dbReference>
<dbReference type="CDD" id="cd01886">
    <property type="entry name" value="EF-G"/>
    <property type="match status" value="1"/>
</dbReference>
<dbReference type="CDD" id="cd16262">
    <property type="entry name" value="EFG_III"/>
    <property type="match status" value="1"/>
</dbReference>
<dbReference type="CDD" id="cd01434">
    <property type="entry name" value="EFG_mtEFG1_IV"/>
    <property type="match status" value="1"/>
</dbReference>
<dbReference type="CDD" id="cd03713">
    <property type="entry name" value="EFG_mtEFG_C"/>
    <property type="match status" value="1"/>
</dbReference>
<dbReference type="CDD" id="cd04088">
    <property type="entry name" value="EFG_mtEFG_II"/>
    <property type="match status" value="1"/>
</dbReference>
<dbReference type="FunFam" id="2.40.30.10:FF:000006">
    <property type="entry name" value="Elongation factor G"/>
    <property type="match status" value="1"/>
</dbReference>
<dbReference type="FunFam" id="3.30.230.10:FF:000003">
    <property type="entry name" value="Elongation factor G"/>
    <property type="match status" value="1"/>
</dbReference>
<dbReference type="FunFam" id="3.30.70.240:FF:000001">
    <property type="entry name" value="Elongation factor G"/>
    <property type="match status" value="1"/>
</dbReference>
<dbReference type="FunFam" id="3.30.70.870:FF:000001">
    <property type="entry name" value="Elongation factor G"/>
    <property type="match status" value="1"/>
</dbReference>
<dbReference type="FunFam" id="3.40.50.300:FF:000029">
    <property type="entry name" value="Elongation factor G"/>
    <property type="match status" value="1"/>
</dbReference>
<dbReference type="Gene3D" id="3.30.230.10">
    <property type="match status" value="1"/>
</dbReference>
<dbReference type="Gene3D" id="3.30.70.240">
    <property type="match status" value="1"/>
</dbReference>
<dbReference type="Gene3D" id="3.30.70.870">
    <property type="entry name" value="Elongation Factor G (Translational Gtpase), domain 3"/>
    <property type="match status" value="1"/>
</dbReference>
<dbReference type="Gene3D" id="3.40.50.300">
    <property type="entry name" value="P-loop containing nucleotide triphosphate hydrolases"/>
    <property type="match status" value="1"/>
</dbReference>
<dbReference type="Gene3D" id="2.40.30.10">
    <property type="entry name" value="Translation factors"/>
    <property type="match status" value="1"/>
</dbReference>
<dbReference type="HAMAP" id="MF_00054_B">
    <property type="entry name" value="EF_G_EF_2_B"/>
    <property type="match status" value="1"/>
</dbReference>
<dbReference type="InterPro" id="IPR041095">
    <property type="entry name" value="EFG_II"/>
</dbReference>
<dbReference type="InterPro" id="IPR009022">
    <property type="entry name" value="EFG_III"/>
</dbReference>
<dbReference type="InterPro" id="IPR035647">
    <property type="entry name" value="EFG_III/V"/>
</dbReference>
<dbReference type="InterPro" id="IPR047872">
    <property type="entry name" value="EFG_IV"/>
</dbReference>
<dbReference type="InterPro" id="IPR035649">
    <property type="entry name" value="EFG_V"/>
</dbReference>
<dbReference type="InterPro" id="IPR000640">
    <property type="entry name" value="EFG_V-like"/>
</dbReference>
<dbReference type="InterPro" id="IPR004161">
    <property type="entry name" value="EFTu-like_2"/>
</dbReference>
<dbReference type="InterPro" id="IPR031157">
    <property type="entry name" value="G_TR_CS"/>
</dbReference>
<dbReference type="InterPro" id="IPR027417">
    <property type="entry name" value="P-loop_NTPase"/>
</dbReference>
<dbReference type="InterPro" id="IPR020568">
    <property type="entry name" value="Ribosomal_Su5_D2-typ_SF"/>
</dbReference>
<dbReference type="InterPro" id="IPR014721">
    <property type="entry name" value="Ribsml_uS5_D2-typ_fold_subgr"/>
</dbReference>
<dbReference type="InterPro" id="IPR005225">
    <property type="entry name" value="Small_GTP-bd"/>
</dbReference>
<dbReference type="InterPro" id="IPR000795">
    <property type="entry name" value="T_Tr_GTP-bd_dom"/>
</dbReference>
<dbReference type="InterPro" id="IPR009000">
    <property type="entry name" value="Transl_B-barrel_sf"/>
</dbReference>
<dbReference type="InterPro" id="IPR004540">
    <property type="entry name" value="Transl_elong_EFG/EF2"/>
</dbReference>
<dbReference type="InterPro" id="IPR005517">
    <property type="entry name" value="Transl_elong_EFG/EF2_IV"/>
</dbReference>
<dbReference type="NCBIfam" id="TIGR00484">
    <property type="entry name" value="EF-G"/>
    <property type="match status" value="1"/>
</dbReference>
<dbReference type="NCBIfam" id="NF009379">
    <property type="entry name" value="PRK12740.1-3"/>
    <property type="match status" value="1"/>
</dbReference>
<dbReference type="NCBIfam" id="NF009381">
    <property type="entry name" value="PRK12740.1-5"/>
    <property type="match status" value="1"/>
</dbReference>
<dbReference type="NCBIfam" id="TIGR00231">
    <property type="entry name" value="small_GTP"/>
    <property type="match status" value="1"/>
</dbReference>
<dbReference type="PANTHER" id="PTHR43261:SF1">
    <property type="entry name" value="RIBOSOME-RELEASING FACTOR 2, MITOCHONDRIAL"/>
    <property type="match status" value="1"/>
</dbReference>
<dbReference type="PANTHER" id="PTHR43261">
    <property type="entry name" value="TRANSLATION ELONGATION FACTOR G-RELATED"/>
    <property type="match status" value="1"/>
</dbReference>
<dbReference type="Pfam" id="PF00679">
    <property type="entry name" value="EFG_C"/>
    <property type="match status" value="1"/>
</dbReference>
<dbReference type="Pfam" id="PF14492">
    <property type="entry name" value="EFG_III"/>
    <property type="match status" value="1"/>
</dbReference>
<dbReference type="Pfam" id="PF03764">
    <property type="entry name" value="EFG_IV"/>
    <property type="match status" value="1"/>
</dbReference>
<dbReference type="Pfam" id="PF00009">
    <property type="entry name" value="GTP_EFTU"/>
    <property type="match status" value="1"/>
</dbReference>
<dbReference type="Pfam" id="PF03144">
    <property type="entry name" value="GTP_EFTU_D2"/>
    <property type="match status" value="1"/>
</dbReference>
<dbReference type="PRINTS" id="PR00315">
    <property type="entry name" value="ELONGATNFCT"/>
</dbReference>
<dbReference type="SMART" id="SM00838">
    <property type="entry name" value="EFG_C"/>
    <property type="match status" value="1"/>
</dbReference>
<dbReference type="SMART" id="SM00889">
    <property type="entry name" value="EFG_IV"/>
    <property type="match status" value="1"/>
</dbReference>
<dbReference type="SUPFAM" id="SSF54980">
    <property type="entry name" value="EF-G C-terminal domain-like"/>
    <property type="match status" value="2"/>
</dbReference>
<dbReference type="SUPFAM" id="SSF52540">
    <property type="entry name" value="P-loop containing nucleoside triphosphate hydrolases"/>
    <property type="match status" value="1"/>
</dbReference>
<dbReference type="SUPFAM" id="SSF54211">
    <property type="entry name" value="Ribosomal protein S5 domain 2-like"/>
    <property type="match status" value="1"/>
</dbReference>
<dbReference type="SUPFAM" id="SSF50447">
    <property type="entry name" value="Translation proteins"/>
    <property type="match status" value="1"/>
</dbReference>
<dbReference type="PROSITE" id="PS00301">
    <property type="entry name" value="G_TR_1"/>
    <property type="match status" value="1"/>
</dbReference>
<dbReference type="PROSITE" id="PS51722">
    <property type="entry name" value="G_TR_2"/>
    <property type="match status" value="1"/>
</dbReference>
<protein>
    <recommendedName>
        <fullName>Elongation factor G</fullName>
        <shortName>EF-G</shortName>
    </recommendedName>
</protein>
<gene>
    <name type="primary">fusA</name>
    <name type="ordered locus">HP_1195</name>
</gene>
<feature type="initiator methionine" description="Removed" evidence="1">
    <location>
        <position position="1"/>
    </location>
</feature>
<feature type="chain" id="PRO_0000091134" description="Elongation factor G">
    <location>
        <begin position="2"/>
        <end position="692"/>
    </location>
</feature>
<feature type="domain" description="tr-type G">
    <location>
        <begin position="8"/>
        <end position="283"/>
    </location>
</feature>
<feature type="binding site" evidence="1">
    <location>
        <begin position="17"/>
        <end position="24"/>
    </location>
    <ligand>
        <name>GTP</name>
        <dbReference type="ChEBI" id="CHEBI:37565"/>
    </ligand>
</feature>
<feature type="binding site" evidence="1">
    <location>
        <begin position="81"/>
        <end position="85"/>
    </location>
    <ligand>
        <name>GTP</name>
        <dbReference type="ChEBI" id="CHEBI:37565"/>
    </ligand>
</feature>
<feature type="binding site" evidence="1">
    <location>
        <begin position="135"/>
        <end position="138"/>
    </location>
    <ligand>
        <name>GTP</name>
        <dbReference type="ChEBI" id="CHEBI:37565"/>
    </ligand>
</feature>